<evidence type="ECO:0000305" key="1"/>
<dbReference type="EMBL" id="AB018108">
    <property type="protein sequence ID" value="BAB11132.1"/>
    <property type="molecule type" value="Genomic_DNA"/>
</dbReference>
<dbReference type="EMBL" id="AL021684">
    <property type="protein sequence ID" value="CAA16676.1"/>
    <property type="status" value="ALT_SEQ"/>
    <property type="molecule type" value="Genomic_DNA"/>
</dbReference>
<dbReference type="EMBL" id="CP002688">
    <property type="protein sequence ID" value="AED98114.1"/>
    <property type="molecule type" value="Genomic_DNA"/>
</dbReference>
<dbReference type="EMBL" id="BT015075">
    <property type="protein sequence ID" value="AAT71947.1"/>
    <property type="molecule type" value="mRNA"/>
</dbReference>
<dbReference type="EMBL" id="BT015673">
    <property type="protein sequence ID" value="AAU15172.1"/>
    <property type="molecule type" value="mRNA"/>
</dbReference>
<dbReference type="PIR" id="T05886">
    <property type="entry name" value="T05886"/>
</dbReference>
<dbReference type="RefSeq" id="NP_201386.1">
    <property type="nucleotide sequence ID" value="NM_125982.2"/>
</dbReference>
<dbReference type="SMR" id="Q9FHP3"/>
<dbReference type="FunCoup" id="Q9FHP3">
    <property type="interactions" value="113"/>
</dbReference>
<dbReference type="PaxDb" id="3702-AT5G65850.1"/>
<dbReference type="ProteomicsDB" id="222466"/>
<dbReference type="EnsemblPlants" id="AT5G65850.1">
    <property type="protein sequence ID" value="AT5G65850.1"/>
    <property type="gene ID" value="AT5G65850"/>
</dbReference>
<dbReference type="GeneID" id="836714"/>
<dbReference type="Gramene" id="AT5G65850.1">
    <property type="protein sequence ID" value="AT5G65850.1"/>
    <property type="gene ID" value="AT5G65850"/>
</dbReference>
<dbReference type="KEGG" id="ath:AT5G65850"/>
<dbReference type="Araport" id="AT5G65850"/>
<dbReference type="TAIR" id="AT5G65850"/>
<dbReference type="eggNOG" id="ENOG502SNHU">
    <property type="taxonomic scope" value="Eukaryota"/>
</dbReference>
<dbReference type="HOGENOM" id="CLU_027176_8_1_1"/>
<dbReference type="InParanoid" id="Q9FHP3"/>
<dbReference type="OMA" id="REWERHI"/>
<dbReference type="PhylomeDB" id="Q9FHP3"/>
<dbReference type="PRO" id="PR:Q9FHP3"/>
<dbReference type="Proteomes" id="UP000006548">
    <property type="component" value="Chromosome 5"/>
</dbReference>
<dbReference type="ExpressionAtlas" id="Q9FHP3">
    <property type="expression patterns" value="baseline and differential"/>
</dbReference>
<dbReference type="Gene3D" id="1.20.1280.50">
    <property type="match status" value="1"/>
</dbReference>
<dbReference type="InterPro" id="IPR013187">
    <property type="entry name" value="F-box-assoc_dom_typ3"/>
</dbReference>
<dbReference type="InterPro" id="IPR017451">
    <property type="entry name" value="F-box-assoc_interact_dom"/>
</dbReference>
<dbReference type="InterPro" id="IPR036047">
    <property type="entry name" value="F-box-like_dom_sf"/>
</dbReference>
<dbReference type="InterPro" id="IPR001810">
    <property type="entry name" value="F-box_dom"/>
</dbReference>
<dbReference type="NCBIfam" id="TIGR01640">
    <property type="entry name" value="F_box_assoc_1"/>
    <property type="match status" value="1"/>
</dbReference>
<dbReference type="PANTHER" id="PTHR31111">
    <property type="entry name" value="BNAA05G37150D PROTEIN-RELATED"/>
    <property type="match status" value="1"/>
</dbReference>
<dbReference type="PANTHER" id="PTHR31111:SF58">
    <property type="entry name" value="F-BOX DOMAIN-CONTAINING PROTEIN"/>
    <property type="match status" value="1"/>
</dbReference>
<dbReference type="Pfam" id="PF00646">
    <property type="entry name" value="F-box"/>
    <property type="match status" value="1"/>
</dbReference>
<dbReference type="Pfam" id="PF08268">
    <property type="entry name" value="FBA_3"/>
    <property type="match status" value="1"/>
</dbReference>
<dbReference type="SMART" id="SM00256">
    <property type="entry name" value="FBOX"/>
    <property type="match status" value="1"/>
</dbReference>
<dbReference type="SUPFAM" id="SSF81383">
    <property type="entry name" value="F-box domain"/>
    <property type="match status" value="1"/>
</dbReference>
<keyword id="KW-1185">Reference proteome</keyword>
<proteinExistence type="evidence at transcript level"/>
<reference key="1">
    <citation type="journal article" date="2000" name="DNA Res.">
        <title>Structural analysis of Arabidopsis thaliana chromosome 5. X. Sequence features of the regions of 3,076,755 bp covered by sixty P1 and TAC clones.</title>
        <authorList>
            <person name="Sato S."/>
            <person name="Nakamura Y."/>
            <person name="Kaneko T."/>
            <person name="Katoh T."/>
            <person name="Asamizu E."/>
            <person name="Kotani H."/>
            <person name="Tabata S."/>
        </authorList>
    </citation>
    <scope>NUCLEOTIDE SEQUENCE [LARGE SCALE GENOMIC DNA]</scope>
    <source>
        <strain>cv. Columbia</strain>
    </source>
</reference>
<reference key="2">
    <citation type="journal article" date="2000" name="Nature">
        <title>Sequence and analysis of chromosome 5 of the plant Arabidopsis thaliana.</title>
        <authorList>
            <person name="Tabata S."/>
            <person name="Kaneko T."/>
            <person name="Nakamura Y."/>
            <person name="Kotani H."/>
            <person name="Kato T."/>
            <person name="Asamizu E."/>
            <person name="Miyajima N."/>
            <person name="Sasamoto S."/>
            <person name="Kimura T."/>
            <person name="Hosouchi T."/>
            <person name="Kawashima K."/>
            <person name="Kohara M."/>
            <person name="Matsumoto M."/>
            <person name="Matsuno A."/>
            <person name="Muraki A."/>
            <person name="Nakayama S."/>
            <person name="Nakazaki N."/>
            <person name="Naruo K."/>
            <person name="Okumura S."/>
            <person name="Shinpo S."/>
            <person name="Takeuchi C."/>
            <person name="Wada T."/>
            <person name="Watanabe A."/>
            <person name="Yamada M."/>
            <person name="Yasuda M."/>
            <person name="Sato S."/>
            <person name="de la Bastide M."/>
            <person name="Huang E."/>
            <person name="Spiegel L."/>
            <person name="Gnoj L."/>
            <person name="O'Shaughnessy A."/>
            <person name="Preston R."/>
            <person name="Habermann K."/>
            <person name="Murray J."/>
            <person name="Johnson D."/>
            <person name="Rohlfing T."/>
            <person name="Nelson J."/>
            <person name="Stoneking T."/>
            <person name="Pepin K."/>
            <person name="Spieth J."/>
            <person name="Sekhon M."/>
            <person name="Armstrong J."/>
            <person name="Becker M."/>
            <person name="Belter E."/>
            <person name="Cordum H."/>
            <person name="Cordes M."/>
            <person name="Courtney L."/>
            <person name="Courtney W."/>
            <person name="Dante M."/>
            <person name="Du H."/>
            <person name="Edwards J."/>
            <person name="Fryman J."/>
            <person name="Haakensen B."/>
            <person name="Lamar E."/>
            <person name="Latreille P."/>
            <person name="Leonard S."/>
            <person name="Meyer R."/>
            <person name="Mulvaney E."/>
            <person name="Ozersky P."/>
            <person name="Riley A."/>
            <person name="Strowmatt C."/>
            <person name="Wagner-McPherson C."/>
            <person name="Wollam A."/>
            <person name="Yoakum M."/>
            <person name="Bell M."/>
            <person name="Dedhia N."/>
            <person name="Parnell L."/>
            <person name="Shah R."/>
            <person name="Rodriguez M."/>
            <person name="Hoon See L."/>
            <person name="Vil D."/>
            <person name="Baker J."/>
            <person name="Kirchoff K."/>
            <person name="Toth K."/>
            <person name="King L."/>
            <person name="Bahret A."/>
            <person name="Miller B."/>
            <person name="Marra M.A."/>
            <person name="Martienssen R."/>
            <person name="McCombie W.R."/>
            <person name="Wilson R.K."/>
            <person name="Murphy G."/>
            <person name="Bancroft I."/>
            <person name="Volckaert G."/>
            <person name="Wambutt R."/>
            <person name="Duesterhoeft A."/>
            <person name="Stiekema W."/>
            <person name="Pohl T."/>
            <person name="Entian K.-D."/>
            <person name="Terryn N."/>
            <person name="Hartley N."/>
            <person name="Bent E."/>
            <person name="Johnson S."/>
            <person name="Langham S.-A."/>
            <person name="McCullagh B."/>
            <person name="Robben J."/>
            <person name="Grymonprez B."/>
            <person name="Zimmermann W."/>
            <person name="Ramsperger U."/>
            <person name="Wedler H."/>
            <person name="Balke K."/>
            <person name="Wedler E."/>
            <person name="Peters S."/>
            <person name="van Staveren M."/>
            <person name="Dirkse W."/>
            <person name="Mooijman P."/>
            <person name="Klein Lankhorst R."/>
            <person name="Weitzenegger T."/>
            <person name="Bothe G."/>
            <person name="Rose M."/>
            <person name="Hauf J."/>
            <person name="Berneiser S."/>
            <person name="Hempel S."/>
            <person name="Feldpausch M."/>
            <person name="Lamberth S."/>
            <person name="Villarroel R."/>
            <person name="Gielen J."/>
            <person name="Ardiles W."/>
            <person name="Bents O."/>
            <person name="Lemcke K."/>
            <person name="Kolesov G."/>
            <person name="Mayer K.F.X."/>
            <person name="Rudd S."/>
            <person name="Schoof H."/>
            <person name="Schueller C."/>
            <person name="Zaccaria P."/>
            <person name="Mewes H.-W."/>
            <person name="Bevan M."/>
            <person name="Fransz P.F."/>
        </authorList>
    </citation>
    <scope>NUCLEOTIDE SEQUENCE [LARGE SCALE GENOMIC DNA]</scope>
    <source>
        <strain>cv. Columbia</strain>
    </source>
</reference>
<reference key="3">
    <citation type="journal article" date="2017" name="Plant J.">
        <title>Araport11: a complete reannotation of the Arabidopsis thaliana reference genome.</title>
        <authorList>
            <person name="Cheng C.Y."/>
            <person name="Krishnakumar V."/>
            <person name="Chan A.P."/>
            <person name="Thibaud-Nissen F."/>
            <person name="Schobel S."/>
            <person name="Town C.D."/>
        </authorList>
    </citation>
    <scope>GENOME REANNOTATION</scope>
    <source>
        <strain>cv. Columbia</strain>
    </source>
</reference>
<reference key="4">
    <citation type="submission" date="2004-09" db="EMBL/GenBank/DDBJ databases">
        <title>Arabidopsis ORF clones.</title>
        <authorList>
            <person name="Cheuk R.F."/>
            <person name="Chen H."/>
            <person name="Kim C.J."/>
            <person name="Shinn P."/>
            <person name="Ecker J.R."/>
        </authorList>
    </citation>
    <scope>NUCLEOTIDE SEQUENCE [LARGE SCALE MRNA]</scope>
    <source>
        <strain>cv. Columbia</strain>
    </source>
</reference>
<feature type="chain" id="PRO_0000283566" description="F-box protein At5g65850">
    <location>
        <begin position="1"/>
        <end position="392"/>
    </location>
</feature>
<feature type="domain" description="F-box">
    <location>
        <begin position="29"/>
        <end position="78"/>
    </location>
</feature>
<sequence>MRTLRRNVTENRLTISRRRTEKKTSPNKTEKSVQIPVDIIIEILLRLPAKSIATCRCVSKLWISVICRQDFTELFLTRSLHRPQLLFCCKKDGNLFFFSSPQLQNPYENSSAISLKNFSLCYKISRPVNGLICFKRKEMNETVTVICNPSTGHTLSLPKPMKTSIGPSRFFVYEPIQKQFKVLLSYKSDEHQVLTLGTGELSWRIIECSMPHILGMSEICINGVLYYPAINLSSGDYIIVCFDVRSEKFRFITVMEEFIKAAHDGTLINYNGKLASLVSERYCFVDGRSKSIELWVLQDAEKKEWSKHTYVLPAWWQHRIGTLNLRFVGVTRTNEIMLSPCYQTVPFDVYYFNIERKTMMSVAIQGMEAFQGHLVFTYLDHVENVKLLHNMF</sequence>
<comment type="sequence caution" evidence="1">
    <conflict type="erroneous gene model prediction">
        <sequence resource="EMBL-CDS" id="CAA16676"/>
    </conflict>
</comment>
<accession>Q9FHP3</accession>
<accession>O49533</accession>
<organism>
    <name type="scientific">Arabidopsis thaliana</name>
    <name type="common">Mouse-ear cress</name>
    <dbReference type="NCBI Taxonomy" id="3702"/>
    <lineage>
        <taxon>Eukaryota</taxon>
        <taxon>Viridiplantae</taxon>
        <taxon>Streptophyta</taxon>
        <taxon>Embryophyta</taxon>
        <taxon>Tracheophyta</taxon>
        <taxon>Spermatophyta</taxon>
        <taxon>Magnoliopsida</taxon>
        <taxon>eudicotyledons</taxon>
        <taxon>Gunneridae</taxon>
        <taxon>Pentapetalae</taxon>
        <taxon>rosids</taxon>
        <taxon>malvids</taxon>
        <taxon>Brassicales</taxon>
        <taxon>Brassicaceae</taxon>
        <taxon>Camelineae</taxon>
        <taxon>Arabidopsis</taxon>
    </lineage>
</organism>
<gene>
    <name type="ordered locus">At5g65850</name>
    <name type="ORF">F6H11.50</name>
    <name type="ORF">K14B20.2</name>
</gene>
<protein>
    <recommendedName>
        <fullName>F-box protein At5g65850</fullName>
    </recommendedName>
</protein>
<name>FB300_ARATH</name>